<feature type="chain" id="PRO_1000138922" description="Deoxyguanosinetriphosphate triphosphohydrolase-like protein">
    <location>
        <begin position="1"/>
        <end position="419"/>
    </location>
</feature>
<feature type="domain" description="HD" evidence="2">
    <location>
        <begin position="71"/>
        <end position="192"/>
    </location>
</feature>
<name>DGTL1_NOCFA</name>
<evidence type="ECO:0000255" key="1">
    <source>
        <dbReference type="HAMAP-Rule" id="MF_01212"/>
    </source>
</evidence>
<evidence type="ECO:0000255" key="2">
    <source>
        <dbReference type="PROSITE-ProRule" id="PRU01175"/>
    </source>
</evidence>
<protein>
    <recommendedName>
        <fullName evidence="1">Deoxyguanosinetriphosphate triphosphohydrolase-like protein</fullName>
    </recommendedName>
</protein>
<organism>
    <name type="scientific">Nocardia farcinica (strain IFM 10152)</name>
    <dbReference type="NCBI Taxonomy" id="247156"/>
    <lineage>
        <taxon>Bacteria</taxon>
        <taxon>Bacillati</taxon>
        <taxon>Actinomycetota</taxon>
        <taxon>Actinomycetes</taxon>
        <taxon>Mycobacteriales</taxon>
        <taxon>Nocardiaceae</taxon>
        <taxon>Nocardia</taxon>
    </lineage>
</organism>
<accession>Q5YZS7</accession>
<comment type="similarity">
    <text evidence="1">Belongs to the dGTPase family. Type 2 subfamily.</text>
</comment>
<gene>
    <name type="ordered locus">NFA_14690</name>
</gene>
<dbReference type="EMBL" id="AP006618">
    <property type="protein sequence ID" value="BAD56314.1"/>
    <property type="molecule type" value="Genomic_DNA"/>
</dbReference>
<dbReference type="RefSeq" id="WP_011207999.1">
    <property type="nucleotide sequence ID" value="NC_006361.1"/>
</dbReference>
<dbReference type="SMR" id="Q5YZS7"/>
<dbReference type="STRING" id="247156.NFA_14690"/>
<dbReference type="GeneID" id="61132284"/>
<dbReference type="KEGG" id="nfa:NFA_14690"/>
<dbReference type="eggNOG" id="COG0232">
    <property type="taxonomic scope" value="Bacteria"/>
</dbReference>
<dbReference type="HOGENOM" id="CLU_028163_0_1_11"/>
<dbReference type="OrthoDB" id="9803619at2"/>
<dbReference type="Proteomes" id="UP000006820">
    <property type="component" value="Chromosome"/>
</dbReference>
<dbReference type="GO" id="GO:0008832">
    <property type="term" value="F:dGTPase activity"/>
    <property type="evidence" value="ECO:0007669"/>
    <property type="project" value="TreeGrafter"/>
</dbReference>
<dbReference type="GO" id="GO:0006203">
    <property type="term" value="P:dGTP catabolic process"/>
    <property type="evidence" value="ECO:0007669"/>
    <property type="project" value="TreeGrafter"/>
</dbReference>
<dbReference type="CDD" id="cd00077">
    <property type="entry name" value="HDc"/>
    <property type="match status" value="1"/>
</dbReference>
<dbReference type="Gene3D" id="1.10.3210.10">
    <property type="entry name" value="Hypothetical protein af1432"/>
    <property type="match status" value="1"/>
</dbReference>
<dbReference type="HAMAP" id="MF_01212">
    <property type="entry name" value="dGTPase_type2"/>
    <property type="match status" value="1"/>
</dbReference>
<dbReference type="InterPro" id="IPR006261">
    <property type="entry name" value="dGTPase"/>
</dbReference>
<dbReference type="InterPro" id="IPR050135">
    <property type="entry name" value="dGTPase-like"/>
</dbReference>
<dbReference type="InterPro" id="IPR023023">
    <property type="entry name" value="dNTPase_2"/>
</dbReference>
<dbReference type="InterPro" id="IPR003607">
    <property type="entry name" value="HD/PDEase_dom"/>
</dbReference>
<dbReference type="InterPro" id="IPR006674">
    <property type="entry name" value="HD_domain"/>
</dbReference>
<dbReference type="InterPro" id="IPR006675">
    <property type="entry name" value="HDIG_dom"/>
</dbReference>
<dbReference type="InterPro" id="IPR026875">
    <property type="entry name" value="PHydrolase_assoc_dom"/>
</dbReference>
<dbReference type="NCBIfam" id="TIGR01353">
    <property type="entry name" value="dGTP_triPase"/>
    <property type="match status" value="1"/>
</dbReference>
<dbReference type="NCBIfam" id="TIGR00277">
    <property type="entry name" value="HDIG"/>
    <property type="match status" value="1"/>
</dbReference>
<dbReference type="NCBIfam" id="NF002829">
    <property type="entry name" value="PRK03007.1"/>
    <property type="match status" value="1"/>
</dbReference>
<dbReference type="PANTHER" id="PTHR11373:SF32">
    <property type="entry name" value="DEOXYGUANOSINETRIPHOSPHATE TRIPHOSPHOHYDROLASE"/>
    <property type="match status" value="1"/>
</dbReference>
<dbReference type="PANTHER" id="PTHR11373">
    <property type="entry name" value="DEOXYNUCLEOSIDE TRIPHOSPHATE TRIPHOSPHOHYDROLASE"/>
    <property type="match status" value="1"/>
</dbReference>
<dbReference type="Pfam" id="PF01966">
    <property type="entry name" value="HD"/>
    <property type="match status" value="1"/>
</dbReference>
<dbReference type="Pfam" id="PF13286">
    <property type="entry name" value="HD_assoc"/>
    <property type="match status" value="1"/>
</dbReference>
<dbReference type="SMART" id="SM00471">
    <property type="entry name" value="HDc"/>
    <property type="match status" value="1"/>
</dbReference>
<dbReference type="SUPFAM" id="SSF109604">
    <property type="entry name" value="HD-domain/PDEase-like"/>
    <property type="match status" value="1"/>
</dbReference>
<dbReference type="PROSITE" id="PS51831">
    <property type="entry name" value="HD"/>
    <property type="match status" value="1"/>
</dbReference>
<proteinExistence type="inferred from homology"/>
<keyword id="KW-0378">Hydrolase</keyword>
<keyword id="KW-1185">Reference proteome</keyword>
<reference key="1">
    <citation type="journal article" date="2004" name="Proc. Natl. Acad. Sci. U.S.A.">
        <title>The complete genomic sequence of Nocardia farcinica IFM 10152.</title>
        <authorList>
            <person name="Ishikawa J."/>
            <person name="Yamashita A."/>
            <person name="Mikami Y."/>
            <person name="Hoshino Y."/>
            <person name="Kurita H."/>
            <person name="Hotta K."/>
            <person name="Shiba T."/>
            <person name="Hattori M."/>
        </authorList>
    </citation>
    <scope>NUCLEOTIDE SEQUENCE [LARGE SCALE GENOMIC DNA]</scope>
    <source>
        <strain>IFM 10152</strain>
    </source>
</reference>
<sequence>MGDYTEHDRERMVVEGAKTAGLGSPDTEFTAGHRTQFARDRARVLHSAALRRLADKTQVMGPRDGDTPRTRLTHSIEVAQIGRSIADGLGCDPDLVDLAGLAHDIGHPPYGHNGEKALDAFADPYGGFEGNAQNLRILTRLEPKVLAPDGTSAGLNLTRAALDAAIKYPWGRTGPGTKFGAYDIDADRLAWIRKGAPDRVRSLECQIMDWSDDVAYSVHDVEDGVIAGRIDLRALADPQEQAALAAMGHRQHPELGVDELIAAAQRLSELPVVADAFRYDGTFASSVALKRLTSELVGRFATAAITATRAVAGPAPLVRYQASLGIPPIVAAEVAILKTVALRYVMSDPVHKQRQAAQRERIQAVATGLLATAPRHLDPQLLPWWVEADSDTARVRVIVDQIASYTESRLERVAAQLAG</sequence>